<protein>
    <recommendedName>
        <fullName>Conserved oligomeric Golgi complex subunit 8</fullName>
        <shortName>COG complex subunit 8</shortName>
    </recommendedName>
    <alternativeName>
        <fullName>Component of oligomeric Golgi complex 8</fullName>
    </alternativeName>
</protein>
<comment type="function">
    <text evidence="3">Acts as a component of the peripheral membrane COG complex that is involved in intra-Golgi protein trafficking. COG is located at the cis-Golgi, and regulates tethering of retrograde intra-Golgi vesicles and possibly a number of other membrane trafficking events.</text>
</comment>
<comment type="subunit">
    <text evidence="3">Component of the conserved oligomeric Golgi (COG or Sec34/Sec35) complex which consists of eight different proteins COG1-COG8.</text>
</comment>
<comment type="interaction">
    <interactant intactId="EBI-6035">
        <id>Q04632</id>
    </interactant>
    <interactant intactId="EBI-4835">
        <id>P53079</id>
        <label>COG1</label>
    </interactant>
    <organismsDiffer>false</organismsDiffer>
    <experiments>9</experiments>
</comment>
<comment type="interaction">
    <interactant intactId="EBI-6035">
        <id>Q04632</id>
    </interactant>
    <interactant intactId="EBI-16614">
        <id>P53271</id>
        <label>COG2</label>
    </interactant>
    <organismsDiffer>false</organismsDiffer>
    <experiments>5</experiments>
</comment>
<comment type="interaction">
    <interactant intactId="EBI-6035">
        <id>Q04632</id>
    </interactant>
    <interactant intactId="EBI-4841">
        <id>P53951</id>
        <label>COG5</label>
    </interactant>
    <organismsDiffer>false</organismsDiffer>
    <experiments>4</experiments>
</comment>
<comment type="interaction">
    <interactant intactId="EBI-6035">
        <id>Q04632</id>
    </interactant>
    <interactant intactId="EBI-4829">
        <id>P53959</id>
        <label>COG6</label>
    </interactant>
    <organismsDiffer>false</organismsDiffer>
    <experiments>6</experiments>
</comment>
<comment type="interaction">
    <interactant intactId="EBI-6035">
        <id>Q04632</id>
    </interactant>
    <interactant intactId="EBI-4847">
        <id>P53195</id>
        <label>COG7</label>
    </interactant>
    <organismsDiffer>false</organismsDiffer>
    <experiments>3</experiments>
</comment>
<comment type="subcellular location">
    <subcellularLocation>
        <location evidence="1">Golgi apparatus membrane</location>
        <topology evidence="1">Peripheral membrane protein</topology>
    </subcellularLocation>
</comment>
<comment type="miscellaneous">
    <text evidence="4">Present with 6440 molecules/cell in log phase SD medium.</text>
</comment>
<comment type="similarity">
    <text evidence="5">Belongs to the COG8 family.</text>
</comment>
<feature type="chain" id="PRO_0000213525" description="Conserved oligomeric Golgi complex subunit 8">
    <location>
        <begin position="1"/>
        <end position="607"/>
    </location>
</feature>
<feature type="region of interest" description="Disordered" evidence="2">
    <location>
        <begin position="375"/>
        <end position="514"/>
    </location>
</feature>
<feature type="compositionally biased region" description="Basic and acidic residues" evidence="2">
    <location>
        <begin position="375"/>
        <end position="394"/>
    </location>
</feature>
<feature type="compositionally biased region" description="Basic and acidic residues" evidence="2">
    <location>
        <begin position="406"/>
        <end position="466"/>
    </location>
</feature>
<feature type="compositionally biased region" description="Basic and acidic residues" evidence="2">
    <location>
        <begin position="480"/>
        <end position="491"/>
    </location>
</feature>
<feature type="compositionally biased region" description="Basic and acidic residues" evidence="2">
    <location>
        <begin position="505"/>
        <end position="514"/>
    </location>
</feature>
<feature type="modified residue" description="Phosphoserine" evidence="6">
    <location>
        <position position="410"/>
    </location>
</feature>
<dbReference type="EMBL" id="Z38114">
    <property type="protein sequence ID" value="CAA86249.1"/>
    <property type="molecule type" value="Genomic_DNA"/>
</dbReference>
<dbReference type="EMBL" id="Z46373">
    <property type="protein sequence ID" value="CAA86507.1"/>
    <property type="molecule type" value="Genomic_DNA"/>
</dbReference>
<dbReference type="EMBL" id="BK006946">
    <property type="protein sequence ID" value="DAA09826.1"/>
    <property type="molecule type" value="Genomic_DNA"/>
</dbReference>
<dbReference type="PIR" id="S48326">
    <property type="entry name" value="S48326"/>
</dbReference>
<dbReference type="RefSeq" id="NP_013640.1">
    <property type="nucleotide sequence ID" value="NM_001182430.1"/>
</dbReference>
<dbReference type="BioGRID" id="35070">
    <property type="interactions" value="408"/>
</dbReference>
<dbReference type="ComplexPortal" id="CPX-1840">
    <property type="entry name" value="COG Golgi transport complex"/>
</dbReference>
<dbReference type="DIP" id="DIP-6749N"/>
<dbReference type="FunCoup" id="Q04632">
    <property type="interactions" value="80"/>
</dbReference>
<dbReference type="IntAct" id="Q04632">
    <property type="interactions" value="23"/>
</dbReference>
<dbReference type="MINT" id="Q04632"/>
<dbReference type="STRING" id="4932.YML071C"/>
<dbReference type="iPTMnet" id="Q04632"/>
<dbReference type="PaxDb" id="4932-YML071C"/>
<dbReference type="PeptideAtlas" id="Q04632"/>
<dbReference type="EnsemblFungi" id="YML071C_mRNA">
    <property type="protein sequence ID" value="YML071C"/>
    <property type="gene ID" value="YML071C"/>
</dbReference>
<dbReference type="GeneID" id="854904"/>
<dbReference type="KEGG" id="sce:YML071C"/>
<dbReference type="AGR" id="SGD:S000004536"/>
<dbReference type="SGD" id="S000004536">
    <property type="gene designation" value="COG8"/>
</dbReference>
<dbReference type="VEuPathDB" id="FungiDB:YML071C"/>
<dbReference type="eggNOG" id="KOG2069">
    <property type="taxonomic scope" value="Eukaryota"/>
</dbReference>
<dbReference type="GeneTree" id="ENSGT00390000015893"/>
<dbReference type="HOGENOM" id="CLU_031416_0_0_1"/>
<dbReference type="InParanoid" id="Q04632"/>
<dbReference type="OMA" id="CLQLVYC"/>
<dbReference type="OrthoDB" id="1661054at2759"/>
<dbReference type="BioCyc" id="YEAST:G3O-32665-MONOMER"/>
<dbReference type="BioGRID-ORCS" id="854904">
    <property type="hits" value="2 hits in 10 CRISPR screens"/>
</dbReference>
<dbReference type="PRO" id="PR:Q04632"/>
<dbReference type="Proteomes" id="UP000002311">
    <property type="component" value="Chromosome XIII"/>
</dbReference>
<dbReference type="RNAct" id="Q04632">
    <property type="molecule type" value="protein"/>
</dbReference>
<dbReference type="GO" id="GO:0005829">
    <property type="term" value="C:cytosol"/>
    <property type="evidence" value="ECO:0007005"/>
    <property type="project" value="SGD"/>
</dbReference>
<dbReference type="GO" id="GO:0000139">
    <property type="term" value="C:Golgi membrane"/>
    <property type="evidence" value="ECO:0000303"/>
    <property type="project" value="ComplexPortal"/>
</dbReference>
<dbReference type="GO" id="GO:0017119">
    <property type="term" value="C:Golgi transport complex"/>
    <property type="evidence" value="ECO:0000315"/>
    <property type="project" value="SGD"/>
</dbReference>
<dbReference type="GO" id="GO:0032258">
    <property type="term" value="P:cytoplasm to vacuole targeting by the Cvt pathway"/>
    <property type="evidence" value="ECO:0000315"/>
    <property type="project" value="SGD"/>
</dbReference>
<dbReference type="GO" id="GO:0006891">
    <property type="term" value="P:intra-Golgi vesicle-mediated transport"/>
    <property type="evidence" value="ECO:0000315"/>
    <property type="project" value="SGD"/>
</dbReference>
<dbReference type="GO" id="GO:0000301">
    <property type="term" value="P:retrograde transport, vesicle recycling within Golgi"/>
    <property type="evidence" value="ECO:0000303"/>
    <property type="project" value="ComplexPortal"/>
</dbReference>
<dbReference type="InterPro" id="IPR007255">
    <property type="entry name" value="COG8"/>
</dbReference>
<dbReference type="PANTHER" id="PTHR21311">
    <property type="entry name" value="CONSERVED OLIGOMERIC GOLGI COMPLEX COMPONENT 8"/>
    <property type="match status" value="1"/>
</dbReference>
<dbReference type="PANTHER" id="PTHR21311:SF0">
    <property type="entry name" value="CONSERVED OLIGOMERIC GOLGI COMPLEX SUBUNIT 8"/>
    <property type="match status" value="1"/>
</dbReference>
<dbReference type="Pfam" id="PF04124">
    <property type="entry name" value="Dor1"/>
    <property type="match status" value="1"/>
</dbReference>
<keyword id="KW-0333">Golgi apparatus</keyword>
<keyword id="KW-0472">Membrane</keyword>
<keyword id="KW-0597">Phosphoprotein</keyword>
<keyword id="KW-0653">Protein transport</keyword>
<keyword id="KW-1185">Reference proteome</keyword>
<keyword id="KW-0813">Transport</keyword>
<reference key="1">
    <citation type="journal article" date="1997" name="Nature">
        <title>The nucleotide sequence of Saccharomyces cerevisiae chromosome XIII.</title>
        <authorList>
            <person name="Bowman S."/>
            <person name="Churcher C.M."/>
            <person name="Badcock K."/>
            <person name="Brown D."/>
            <person name="Chillingworth T."/>
            <person name="Connor R."/>
            <person name="Dedman K."/>
            <person name="Devlin K."/>
            <person name="Gentles S."/>
            <person name="Hamlin N."/>
            <person name="Hunt S."/>
            <person name="Jagels K."/>
            <person name="Lye G."/>
            <person name="Moule S."/>
            <person name="Odell C."/>
            <person name="Pearson D."/>
            <person name="Rajandream M.A."/>
            <person name="Rice P."/>
            <person name="Skelton J."/>
            <person name="Walsh S.V."/>
            <person name="Whitehead S."/>
            <person name="Barrell B.G."/>
        </authorList>
    </citation>
    <scope>NUCLEOTIDE SEQUENCE [LARGE SCALE GENOMIC DNA]</scope>
    <source>
        <strain>ATCC 204508 / S288c</strain>
    </source>
</reference>
<reference key="2">
    <citation type="journal article" date="2014" name="G3 (Bethesda)">
        <title>The reference genome sequence of Saccharomyces cerevisiae: Then and now.</title>
        <authorList>
            <person name="Engel S.R."/>
            <person name="Dietrich F.S."/>
            <person name="Fisk D.G."/>
            <person name="Binkley G."/>
            <person name="Balakrishnan R."/>
            <person name="Costanzo M.C."/>
            <person name="Dwight S.S."/>
            <person name="Hitz B.C."/>
            <person name="Karra K."/>
            <person name="Nash R.S."/>
            <person name="Weng S."/>
            <person name="Wong E.D."/>
            <person name="Lloyd P."/>
            <person name="Skrzypek M.S."/>
            <person name="Miyasato S.R."/>
            <person name="Simison M."/>
            <person name="Cherry J.M."/>
        </authorList>
    </citation>
    <scope>GENOME REANNOTATION</scope>
    <source>
        <strain>ATCC 204508 / S288c</strain>
    </source>
</reference>
<reference key="3">
    <citation type="journal article" date="2001" name="Dev. Cell">
        <title>The Sec34/35 Golgi transport complex is related to the exocyst, defining a family of complexes involved in multiple steps of membrane traffic.</title>
        <authorList>
            <person name="Whyte J.R."/>
            <person name="Munro S."/>
        </authorList>
    </citation>
    <scope>FUNCTION</scope>
    <scope>SUBUNIT</scope>
</reference>
<reference key="4">
    <citation type="journal article" date="2003" name="Nature">
        <title>Global analysis of protein expression in yeast.</title>
        <authorList>
            <person name="Ghaemmaghami S."/>
            <person name="Huh W.-K."/>
            <person name="Bower K."/>
            <person name="Howson R.W."/>
            <person name="Belle A."/>
            <person name="Dephoure N."/>
            <person name="O'Shea E.K."/>
            <person name="Weissman J.S."/>
        </authorList>
    </citation>
    <scope>LEVEL OF PROTEIN EXPRESSION [LARGE SCALE ANALYSIS]</scope>
</reference>
<reference key="5">
    <citation type="journal article" date="2004" name="J. Biol. Chem.">
        <title>The binary interacting network of the conserved oligomeric Golgi tethering complex.</title>
        <authorList>
            <person name="Loh E."/>
            <person name="Hong W."/>
        </authorList>
    </citation>
    <scope>COMPOSITION OF THE COG COMPLEX</scope>
    <scope>INTERACTION WITH COG3 AND COG4</scope>
</reference>
<reference key="6">
    <citation type="journal article" date="2009" name="Science">
        <title>Global analysis of Cdk1 substrate phosphorylation sites provides insights into evolution.</title>
        <authorList>
            <person name="Holt L.J."/>
            <person name="Tuch B.B."/>
            <person name="Villen J."/>
            <person name="Johnson A.D."/>
            <person name="Gygi S.P."/>
            <person name="Morgan D.O."/>
        </authorList>
    </citation>
    <scope>PHOSPHORYLATION [LARGE SCALE ANALYSIS] AT SER-410</scope>
    <scope>IDENTIFICATION BY MASS SPECTROMETRY [LARGE SCALE ANALYSIS]</scope>
</reference>
<reference key="7">
    <citation type="journal article" date="2012" name="Proc. Natl. Acad. Sci. U.S.A.">
        <title>N-terminal acetylome analyses and functional insights of the N-terminal acetyltransferase NatB.</title>
        <authorList>
            <person name="Van Damme P."/>
            <person name="Lasa M."/>
            <person name="Polevoda B."/>
            <person name="Gazquez C."/>
            <person name="Elosegui-Artola A."/>
            <person name="Kim D.S."/>
            <person name="De Juan-Pardo E."/>
            <person name="Demeyer K."/>
            <person name="Hole K."/>
            <person name="Larrea E."/>
            <person name="Timmerman E."/>
            <person name="Prieto J."/>
            <person name="Arnesen T."/>
            <person name="Sherman F."/>
            <person name="Gevaert K."/>
            <person name="Aldabe R."/>
        </authorList>
    </citation>
    <scope>IDENTIFICATION BY MASS SPECTROMETRY [LARGE SCALE ANALYSIS]</scope>
</reference>
<accession>Q04632</accession>
<accession>D6VZA2</accession>
<accession>Q03641</accession>
<sequence length="607" mass="69829">MELILNSLISDDLTEEQKRLSLDFLQDILQSNTKDYESYFSSRAVPGSITEDIAEIDAELSALDRKIRKTLLDNTSQIIGNILENDDRAQLDDIAKSLEQLWELDTNINKAADRNVTNDDINNESVSIDDFLEDDKEDNDTGRIMTTESNNLARKKKEDEFHKALSRLRNRISTKEDDKDDIRSDTLVTVLENLDSITDLMELPFLARTCIRTGHYQEAVMLYTHTTSLRSRFPGSTIVDEVCEKVLNEISTTMLSGLVKLLSTNVSVNSLKKILQYLNSIPPFDGKTNKSLLSVFLAMRYKFITDEIASYPLDVESSNESLIEMMVKRKIEVLREHVYMSLNVFLKSFLYDTNDLEIPFPEELESTVLRINGTNEEKEIEEKEKETKKEEYQKQDSVANNEEDVTENKSIEDVQEEVQGKVEGEDDGAERKTENEIENETVNKTEDKAEKEKEEEVNTKDNKAEKEEEEINKVEVTPEEPSKSIDNKAEKEEEEINKVEVTPEEPSKKIRTSKRENKIPTNAVMLQFVDKCITYVLKDLTRGLNSIKLSDSVCLQLVYCSFRLCDLNRNYHHLFLKKINDTSLFTTEQLARAIDKRAELASKYIYS</sequence>
<organism>
    <name type="scientific">Saccharomyces cerevisiae (strain ATCC 204508 / S288c)</name>
    <name type="common">Baker's yeast</name>
    <dbReference type="NCBI Taxonomy" id="559292"/>
    <lineage>
        <taxon>Eukaryota</taxon>
        <taxon>Fungi</taxon>
        <taxon>Dikarya</taxon>
        <taxon>Ascomycota</taxon>
        <taxon>Saccharomycotina</taxon>
        <taxon>Saccharomycetes</taxon>
        <taxon>Saccharomycetales</taxon>
        <taxon>Saccharomycetaceae</taxon>
        <taxon>Saccharomyces</taxon>
    </lineage>
</organism>
<name>COG8_YEAST</name>
<evidence type="ECO:0000250" key="1"/>
<evidence type="ECO:0000256" key="2">
    <source>
        <dbReference type="SAM" id="MobiDB-lite"/>
    </source>
</evidence>
<evidence type="ECO:0000269" key="3">
    <source>
    </source>
</evidence>
<evidence type="ECO:0000269" key="4">
    <source>
    </source>
</evidence>
<evidence type="ECO:0000305" key="5"/>
<evidence type="ECO:0007744" key="6">
    <source>
    </source>
</evidence>
<proteinExistence type="evidence at protein level"/>
<gene>
    <name type="primary">COG8</name>
    <name type="synonym">DOR1</name>
    <name type="ordered locus">YML071C</name>
</gene>